<name>SPD2B_MOUSE</name>
<organism>
    <name type="scientific">Mus musculus</name>
    <name type="common">Mouse</name>
    <dbReference type="NCBI Taxonomy" id="10090"/>
    <lineage>
        <taxon>Eukaryota</taxon>
        <taxon>Metazoa</taxon>
        <taxon>Chordata</taxon>
        <taxon>Craniata</taxon>
        <taxon>Vertebrata</taxon>
        <taxon>Euteleostomi</taxon>
        <taxon>Mammalia</taxon>
        <taxon>Eutheria</taxon>
        <taxon>Euarchontoglires</taxon>
        <taxon>Glires</taxon>
        <taxon>Rodentia</taxon>
        <taxon>Myomorpha</taxon>
        <taxon>Muroidea</taxon>
        <taxon>Muridae</taxon>
        <taxon>Murinae</taxon>
        <taxon>Mus</taxon>
        <taxon>Mus</taxon>
    </lineage>
</organism>
<proteinExistence type="evidence at protein level"/>
<dbReference type="EMBL" id="AB430861">
    <property type="protein sequence ID" value="BAG81976.1"/>
    <property type="molecule type" value="mRNA"/>
</dbReference>
<dbReference type="EMBL" id="AK089330">
    <property type="protein sequence ID" value="BAC40843.1"/>
    <property type="status" value="ALT_FRAME"/>
    <property type="molecule type" value="mRNA"/>
</dbReference>
<dbReference type="EMBL" id="AK171384">
    <property type="protein sequence ID" value="BAE42425.1"/>
    <property type="molecule type" value="mRNA"/>
</dbReference>
<dbReference type="EMBL" id="AL662780">
    <property type="status" value="NOT_ANNOTATED_CDS"/>
    <property type="molecule type" value="Genomic_DNA"/>
</dbReference>
<dbReference type="EMBL" id="BC115711">
    <property type="protein sequence ID" value="AAI15712.1"/>
    <property type="molecule type" value="mRNA"/>
</dbReference>
<dbReference type="EMBL" id="BC115764">
    <property type="protein sequence ID" value="AAI15765.1"/>
    <property type="molecule type" value="mRNA"/>
</dbReference>
<dbReference type="CCDS" id="CCDS24526.1"/>
<dbReference type="RefSeq" id="NP_796338.2">
    <property type="nucleotide sequence ID" value="NM_177364.4"/>
</dbReference>
<dbReference type="SMR" id="A2AAY5"/>
<dbReference type="BioGRID" id="234494">
    <property type="interactions" value="6"/>
</dbReference>
<dbReference type="FunCoup" id="A2AAY5">
    <property type="interactions" value="990"/>
</dbReference>
<dbReference type="IntAct" id="A2AAY5">
    <property type="interactions" value="1"/>
</dbReference>
<dbReference type="STRING" id="10090.ENSMUSP00000044276"/>
<dbReference type="GlyGen" id="A2AAY5">
    <property type="glycosylation" value="2 sites, 1 O-linked glycan (1 site)"/>
</dbReference>
<dbReference type="iPTMnet" id="A2AAY5"/>
<dbReference type="PhosphoSitePlus" id="A2AAY5"/>
<dbReference type="jPOST" id="A2AAY5"/>
<dbReference type="PaxDb" id="10090-ENSMUSP00000044276"/>
<dbReference type="PeptideAtlas" id="A2AAY5"/>
<dbReference type="ProteomicsDB" id="261126"/>
<dbReference type="Pumba" id="A2AAY5"/>
<dbReference type="Antibodypedia" id="49665">
    <property type="antibodies" value="86 antibodies from 15 providers"/>
</dbReference>
<dbReference type="DNASU" id="268396"/>
<dbReference type="Ensembl" id="ENSMUST00000038753.6">
    <property type="protein sequence ID" value="ENSMUSP00000044276.6"/>
    <property type="gene ID" value="ENSMUSG00000040711.9"/>
</dbReference>
<dbReference type="GeneID" id="268396"/>
<dbReference type="KEGG" id="mmu:268396"/>
<dbReference type="UCSC" id="uc007ijq.1">
    <property type="organism name" value="mouse"/>
</dbReference>
<dbReference type="AGR" id="MGI:2442062"/>
<dbReference type="CTD" id="285590"/>
<dbReference type="MGI" id="MGI:2442062">
    <property type="gene designation" value="Sh3pxd2b"/>
</dbReference>
<dbReference type="VEuPathDB" id="HostDB:ENSMUSG00000040711"/>
<dbReference type="eggNOG" id="KOG0905">
    <property type="taxonomic scope" value="Eukaryota"/>
</dbReference>
<dbReference type="GeneTree" id="ENSGT00940000158396"/>
<dbReference type="HOGENOM" id="CLU_013051_1_0_1"/>
<dbReference type="InParanoid" id="A2AAY5"/>
<dbReference type="OrthoDB" id="10255964at2759"/>
<dbReference type="PhylomeDB" id="A2AAY5"/>
<dbReference type="TreeFam" id="TF329347"/>
<dbReference type="BioGRID-ORCS" id="268396">
    <property type="hits" value="2 hits in 80 CRISPR screens"/>
</dbReference>
<dbReference type="PRO" id="PR:A2AAY5"/>
<dbReference type="Proteomes" id="UP000000589">
    <property type="component" value="Chromosome 11"/>
</dbReference>
<dbReference type="RNAct" id="A2AAY5">
    <property type="molecule type" value="protein"/>
</dbReference>
<dbReference type="Bgee" id="ENSMUSG00000040711">
    <property type="expression patterns" value="Expressed in ear vesicle and 192 other cell types or tissues"/>
</dbReference>
<dbReference type="ExpressionAtlas" id="A2AAY5">
    <property type="expression patterns" value="baseline and differential"/>
</dbReference>
<dbReference type="GO" id="GO:0070161">
    <property type="term" value="C:anchoring junction"/>
    <property type="evidence" value="ECO:0007669"/>
    <property type="project" value="UniProtKB-KW"/>
</dbReference>
<dbReference type="GO" id="GO:0042995">
    <property type="term" value="C:cell projection"/>
    <property type="evidence" value="ECO:0007669"/>
    <property type="project" value="UniProtKB-KW"/>
</dbReference>
<dbReference type="GO" id="GO:0005737">
    <property type="term" value="C:cytoplasm"/>
    <property type="evidence" value="ECO:0000314"/>
    <property type="project" value="UniProtKB"/>
</dbReference>
<dbReference type="GO" id="GO:0002102">
    <property type="term" value="C:podosome"/>
    <property type="evidence" value="ECO:0000314"/>
    <property type="project" value="UniProtKB"/>
</dbReference>
<dbReference type="GO" id="GO:0080025">
    <property type="term" value="F:phosphatidylinositol-3,5-bisphosphate binding"/>
    <property type="evidence" value="ECO:0000314"/>
    <property type="project" value="UniProtKB"/>
</dbReference>
<dbReference type="GO" id="GO:0032266">
    <property type="term" value="F:phosphatidylinositol-3-phosphate binding"/>
    <property type="evidence" value="ECO:0000315"/>
    <property type="project" value="UniProtKB"/>
</dbReference>
<dbReference type="GO" id="GO:0070273">
    <property type="term" value="F:phosphatidylinositol-4-phosphate binding"/>
    <property type="evidence" value="ECO:0000314"/>
    <property type="project" value="UniProtKB"/>
</dbReference>
<dbReference type="GO" id="GO:0010314">
    <property type="term" value="F:phosphatidylinositol-5-phosphate binding"/>
    <property type="evidence" value="ECO:0000314"/>
    <property type="project" value="UniProtKB"/>
</dbReference>
<dbReference type="GO" id="GO:0042169">
    <property type="term" value="F:SH2 domain binding"/>
    <property type="evidence" value="ECO:0000314"/>
    <property type="project" value="UniProtKB"/>
</dbReference>
<dbReference type="GO" id="GO:0060612">
    <property type="term" value="P:adipose tissue development"/>
    <property type="evidence" value="ECO:0000315"/>
    <property type="project" value="UniProtKB"/>
</dbReference>
<dbReference type="GO" id="GO:0060348">
    <property type="term" value="P:bone development"/>
    <property type="evidence" value="ECO:0000315"/>
    <property type="project" value="UniProtKB"/>
</dbReference>
<dbReference type="GO" id="GO:1904888">
    <property type="term" value="P:cranial skeletal system development"/>
    <property type="evidence" value="ECO:0000315"/>
    <property type="project" value="UniProtKB"/>
</dbReference>
<dbReference type="GO" id="GO:0001654">
    <property type="term" value="P:eye development"/>
    <property type="evidence" value="ECO:0000315"/>
    <property type="project" value="UniProtKB"/>
</dbReference>
<dbReference type="GO" id="GO:0007507">
    <property type="term" value="P:heart development"/>
    <property type="evidence" value="ECO:0000315"/>
    <property type="project" value="UniProtKB"/>
</dbReference>
<dbReference type="GO" id="GO:0002051">
    <property type="term" value="P:osteoblast fate commitment"/>
    <property type="evidence" value="ECO:0000315"/>
    <property type="project" value="UniProtKB"/>
</dbReference>
<dbReference type="GO" id="GO:0071800">
    <property type="term" value="P:podosome assembly"/>
    <property type="evidence" value="ECO:0000315"/>
    <property type="project" value="UniProtKB"/>
</dbReference>
<dbReference type="GO" id="GO:1904179">
    <property type="term" value="P:positive regulation of adipose tissue development"/>
    <property type="evidence" value="ECO:0000315"/>
    <property type="project" value="UniProtKB"/>
</dbReference>
<dbReference type="GO" id="GO:0045600">
    <property type="term" value="P:positive regulation of fat cell differentiation"/>
    <property type="evidence" value="ECO:0000315"/>
    <property type="project" value="UniProtKB"/>
</dbReference>
<dbReference type="GO" id="GO:0010628">
    <property type="term" value="P:positive regulation of gene expression"/>
    <property type="evidence" value="ECO:0000315"/>
    <property type="project" value="UniProtKB"/>
</dbReference>
<dbReference type="GO" id="GO:0040018">
    <property type="term" value="P:positive regulation of multicellular organism growth"/>
    <property type="evidence" value="ECO:0000315"/>
    <property type="project" value="UniProtKB"/>
</dbReference>
<dbReference type="GO" id="GO:0051496">
    <property type="term" value="P:positive regulation of stress fiber assembly"/>
    <property type="evidence" value="ECO:0000315"/>
    <property type="project" value="UniProtKB"/>
</dbReference>
<dbReference type="GO" id="GO:0072657">
    <property type="term" value="P:protein localization to membrane"/>
    <property type="evidence" value="ECO:0000250"/>
    <property type="project" value="UniProtKB"/>
</dbReference>
<dbReference type="GO" id="GO:0060378">
    <property type="term" value="P:regulation of brood size"/>
    <property type="evidence" value="ECO:0000315"/>
    <property type="project" value="UniProtKB"/>
</dbReference>
<dbReference type="GO" id="GO:0001501">
    <property type="term" value="P:skeletal system development"/>
    <property type="evidence" value="ECO:0000315"/>
    <property type="project" value="UniProtKB"/>
</dbReference>
<dbReference type="GO" id="GO:0048705">
    <property type="term" value="P:skeletal system morphogenesis"/>
    <property type="evidence" value="ECO:0000315"/>
    <property type="project" value="UniProtKB"/>
</dbReference>
<dbReference type="GO" id="GO:0006801">
    <property type="term" value="P:superoxide metabolic process"/>
    <property type="evidence" value="ECO:0000250"/>
    <property type="project" value="UniProtKB"/>
</dbReference>
<dbReference type="CDD" id="cd06888">
    <property type="entry name" value="PX_FISH"/>
    <property type="match status" value="1"/>
</dbReference>
<dbReference type="CDD" id="cd12075">
    <property type="entry name" value="SH3_Tks4_1"/>
    <property type="match status" value="1"/>
</dbReference>
<dbReference type="CDD" id="cd12076">
    <property type="entry name" value="SH3_Tks4_2"/>
    <property type="match status" value="1"/>
</dbReference>
<dbReference type="CDD" id="cd12078">
    <property type="entry name" value="SH3_Tks4_3"/>
    <property type="match status" value="1"/>
</dbReference>
<dbReference type="CDD" id="cd12018">
    <property type="entry name" value="SH3_Tks4_4"/>
    <property type="match status" value="1"/>
</dbReference>
<dbReference type="FunFam" id="2.30.30.40:FF:000020">
    <property type="entry name" value="SH3 and PX domain-containing protein 2A"/>
    <property type="match status" value="1"/>
</dbReference>
<dbReference type="FunFam" id="2.30.30.40:FF:000031">
    <property type="entry name" value="SH3 and PX domain-containing protein 2A"/>
    <property type="match status" value="1"/>
</dbReference>
<dbReference type="FunFam" id="2.30.30.40:FF:000042">
    <property type="entry name" value="SH3 and PX domain-containing protein 2A"/>
    <property type="match status" value="1"/>
</dbReference>
<dbReference type="FunFam" id="2.30.30.40:FF:000082">
    <property type="entry name" value="SH3 and PX domain-containing protein 2B"/>
    <property type="match status" value="1"/>
</dbReference>
<dbReference type="FunFam" id="3.30.1520.10:FF:000005">
    <property type="entry name" value="SH3 and PX domain-containing protein 2B"/>
    <property type="match status" value="1"/>
</dbReference>
<dbReference type="Gene3D" id="3.30.1520.10">
    <property type="entry name" value="Phox-like domain"/>
    <property type="match status" value="1"/>
</dbReference>
<dbReference type="Gene3D" id="2.30.30.40">
    <property type="entry name" value="SH3 Domains"/>
    <property type="match status" value="4"/>
</dbReference>
<dbReference type="InterPro" id="IPR051228">
    <property type="entry name" value="NADPH_Oxidase/PX-Domain"/>
</dbReference>
<dbReference type="InterPro" id="IPR001683">
    <property type="entry name" value="PX_dom"/>
</dbReference>
<dbReference type="InterPro" id="IPR036871">
    <property type="entry name" value="PX_dom_sf"/>
</dbReference>
<dbReference type="InterPro" id="IPR036028">
    <property type="entry name" value="SH3-like_dom_sf"/>
</dbReference>
<dbReference type="InterPro" id="IPR001452">
    <property type="entry name" value="SH3_domain"/>
</dbReference>
<dbReference type="InterPro" id="IPR037961">
    <property type="entry name" value="SH3PXD2_PX"/>
</dbReference>
<dbReference type="InterPro" id="IPR035477">
    <property type="entry name" value="SH3PXD2B_SH3_1"/>
</dbReference>
<dbReference type="InterPro" id="IPR035478">
    <property type="entry name" value="SH3PXD2B_SH3_2"/>
</dbReference>
<dbReference type="InterPro" id="IPR035479">
    <property type="entry name" value="SH3PXD2B_SH3_3"/>
</dbReference>
<dbReference type="InterPro" id="IPR035480">
    <property type="entry name" value="SH3PXD2B_SH3_4"/>
</dbReference>
<dbReference type="PANTHER" id="PTHR15706:SF26">
    <property type="entry name" value="SH3 AND PX DOMAIN-CONTAINING PROTEIN 2B"/>
    <property type="match status" value="1"/>
</dbReference>
<dbReference type="PANTHER" id="PTHR15706">
    <property type="entry name" value="SH3 MULTIPLE DOMAIN"/>
    <property type="match status" value="1"/>
</dbReference>
<dbReference type="Pfam" id="PF00787">
    <property type="entry name" value="PX"/>
    <property type="match status" value="1"/>
</dbReference>
<dbReference type="Pfam" id="PF00018">
    <property type="entry name" value="SH3_1"/>
    <property type="match status" value="3"/>
</dbReference>
<dbReference type="Pfam" id="PF07653">
    <property type="entry name" value="SH3_2"/>
    <property type="match status" value="1"/>
</dbReference>
<dbReference type="SMART" id="SM00312">
    <property type="entry name" value="PX"/>
    <property type="match status" value="1"/>
</dbReference>
<dbReference type="SMART" id="SM00326">
    <property type="entry name" value="SH3"/>
    <property type="match status" value="4"/>
</dbReference>
<dbReference type="SUPFAM" id="SSF64268">
    <property type="entry name" value="PX domain"/>
    <property type="match status" value="1"/>
</dbReference>
<dbReference type="SUPFAM" id="SSF50044">
    <property type="entry name" value="SH3-domain"/>
    <property type="match status" value="4"/>
</dbReference>
<dbReference type="PROSITE" id="PS50195">
    <property type="entry name" value="PX"/>
    <property type="match status" value="1"/>
</dbReference>
<dbReference type="PROSITE" id="PS50002">
    <property type="entry name" value="SH3"/>
    <property type="match status" value="4"/>
</dbReference>
<sequence>MPPRRSIVEVKVLDVQKRRVPNKHYVYIIRVTWSSGATEAIYRRYSKFFDLQMQMLDKFPMEGGQKDPKQRIIPFLPGKILFRRSHIRDVAVKRLIPIDEYCKALIQLPPYISQCDEVLQFFETRPEDLNPPKEEHIGKKKSGNDPTSVDPMVLEQYVVVADYQKQESSEISLSVGQVVDIIEKNESGWWFVSTAEEQGWVPATCLEGQDGVQDEFSLQPEEEEKYTVIYPYTARDQDEMNLERGAVVEVVQKNLEGWWKIRYQGKEGWAPASYLKKNSGEPLPPKLGPSSPAHSGALDLDGVSRHQNAMGREKELLNNQRDGRFEGRLVPDGDVKQRSPKMRQRPPPRRDMTIPRGLNLPKPPIPPQVEEEYYTIAEFQTTIPDGISFQAGLKVEVIEKSLSGWWYIQMEDKEGWAPATFIDKYKKTSSASRPNFLAPLPHEMTQLRLGDAAATENNTGPEAVGPSRPLPEAPHGAVDSGMLWSKDWKGGKEAPRKASSDLSASTGYEEISDPTQEEKPSLPPRKESIIKSEEELLERERQKMEPLRGSSPKPPGMILPMIPAKHAPLARDSRKPEPKLDKSKFPLRNDMGLECGHKVLAKEVKKPNLRPISRSKAELSEEKVDPTSQNLFMKSRPQVRPKPTPSPKTEPAQSEDHVDIYNLRSKLRPAKSQEKALLDGESHHAAGSHDTALSRSFLPGEGPGHGQDRSGRQDGLSPKETPCRAPPRPAKTTDPGPKNVPVPVQEATLQQRPVVPPRRPPPPKKTSSSPLSCRPLPEVRGAQREESRVAPAAGRALLVPPKAKPFLSNSSVGQDDMRGKGGLGPRVTGKVGETREKAASFLNADGPKDSLYVAVANFEGDEDTSSFQEGTVFEVREKNSSGWWFCQVLSGAPSWEGWIPSNYLRKKP</sequence>
<feature type="chain" id="PRO_0000312202" description="SH3 and PX domain-containing protein 2B">
    <location>
        <begin position="1"/>
        <end position="908"/>
    </location>
</feature>
<feature type="domain" description="PX" evidence="3">
    <location>
        <begin position="5"/>
        <end position="129"/>
    </location>
</feature>
<feature type="domain" description="SH3 1" evidence="4">
    <location>
        <begin position="152"/>
        <end position="211"/>
    </location>
</feature>
<feature type="domain" description="SH3 2" evidence="4">
    <location>
        <begin position="221"/>
        <end position="280"/>
    </location>
</feature>
<feature type="domain" description="SH3 3" evidence="4">
    <location>
        <begin position="368"/>
        <end position="427"/>
    </location>
</feature>
<feature type="domain" description="SH3 4" evidence="4">
    <location>
        <begin position="847"/>
        <end position="908"/>
    </location>
</feature>
<feature type="region of interest" description="Disordered" evidence="5">
    <location>
        <begin position="280"/>
        <end position="300"/>
    </location>
</feature>
<feature type="region of interest" description="Disordered" evidence="5">
    <location>
        <begin position="315"/>
        <end position="366"/>
    </location>
</feature>
<feature type="region of interest" description="Disordered" evidence="5">
    <location>
        <begin position="455"/>
        <end position="832"/>
    </location>
</feature>
<feature type="compositionally biased region" description="Basic and acidic residues" evidence="5">
    <location>
        <begin position="315"/>
        <end position="337"/>
    </location>
</feature>
<feature type="compositionally biased region" description="Basic residues" evidence="5">
    <location>
        <begin position="338"/>
        <end position="347"/>
    </location>
</feature>
<feature type="compositionally biased region" description="Basic and acidic residues" evidence="5">
    <location>
        <begin position="486"/>
        <end position="499"/>
    </location>
</feature>
<feature type="compositionally biased region" description="Basic and acidic residues" evidence="5">
    <location>
        <begin position="516"/>
        <end position="546"/>
    </location>
</feature>
<feature type="compositionally biased region" description="Basic and acidic residues" evidence="5">
    <location>
        <begin position="569"/>
        <end position="584"/>
    </location>
</feature>
<feature type="compositionally biased region" description="Basic and acidic residues" evidence="5">
    <location>
        <begin position="595"/>
        <end position="606"/>
    </location>
</feature>
<feature type="compositionally biased region" description="Basic and acidic residues" evidence="5">
    <location>
        <begin position="615"/>
        <end position="625"/>
    </location>
</feature>
<feature type="compositionally biased region" description="Basic and acidic residues" evidence="5">
    <location>
        <begin position="671"/>
        <end position="684"/>
    </location>
</feature>
<feature type="compositionally biased region" description="Pro residues" evidence="5">
    <location>
        <begin position="754"/>
        <end position="764"/>
    </location>
</feature>
<feature type="modified residue" description="Phosphotyrosine" evidence="12">
    <location>
        <position position="25"/>
    </location>
</feature>
<feature type="modified residue" description="Phosphoserine" evidence="2">
    <location>
        <position position="279"/>
    </location>
</feature>
<feature type="modified residue" description="Phosphoserine" evidence="2">
    <location>
        <position position="291"/>
    </location>
</feature>
<feature type="modified residue" description="Phosphoserine" evidence="15">
    <location>
        <position position="499"/>
    </location>
</feature>
<feature type="modified residue" description="Phosphoserine" evidence="15">
    <location>
        <position position="528"/>
    </location>
</feature>
<feature type="modified residue" description="Phosphotyrosine" evidence="13">
    <location>
        <position position="661"/>
    </location>
</feature>
<feature type="modified residue" description="Phosphoserine" evidence="14">
    <location>
        <position position="840"/>
    </location>
</feature>
<feature type="mutagenesis site" description="Reduced phosphorylation. Almost complete loss of phosphorylation; when associated with F-373 and F-508." evidence="7">
    <original>Y</original>
    <variation>F</variation>
    <location>
        <position position="25"/>
    </location>
</feature>
<feature type="mutagenesis site" description="Reduced phosphorylation. Almost complete loss of phosphorylation; when associated with F-25 and F-508." evidence="7">
    <original>Y</original>
    <variation>F</variation>
    <location>
        <position position="373"/>
    </location>
</feature>
<feature type="mutagenesis site" description="Reduced phosphorylation. Almost complete loss of phosphorylation; when associated with F-25 and F-373." evidence="7">
    <original>Y</original>
    <variation>F</variation>
    <location>
        <position position="508"/>
    </location>
</feature>
<feature type="sequence conflict" description="In Ref. 1; BAG81976 and 4; AAI15765." evidence="11" ref="1 4">
    <original>V</original>
    <variation>M</variation>
    <location>
        <position position="464"/>
    </location>
</feature>
<feature type="sequence conflict" description="In Ref. 1; BAG81976 and 2; BAE42425." evidence="11" ref="1 2">
    <original>V</original>
    <variation>VSV</variation>
    <location>
        <position position="744"/>
    </location>
</feature>
<feature type="sequence conflict" description="In Ref. 1; BAG81976 and 2; BAE42425." evidence="11" ref="1 2">
    <original>L</original>
    <variation>Q</variation>
    <location>
        <position position="749"/>
    </location>
</feature>
<gene>
    <name type="primary">Sh3pxd2b</name>
    <name type="synonym">Fad49</name>
    <name type="synonym">Tks4</name>
</gene>
<protein>
    <recommendedName>
        <fullName>SH3 and PX domain-containing protein 2B</fullName>
    </recommendedName>
    <alternativeName>
        <fullName>Factor for adipocyte differentiation 49</fullName>
    </alternativeName>
    <alternativeName>
        <fullName>Tyrosine kinase substrate with four SH3 domains</fullName>
    </alternativeName>
</protein>
<evidence type="ECO:0000250" key="1"/>
<evidence type="ECO:0000250" key="2">
    <source>
        <dbReference type="UniProtKB" id="A1X283"/>
    </source>
</evidence>
<evidence type="ECO:0000255" key="3">
    <source>
        <dbReference type="PROSITE-ProRule" id="PRU00147"/>
    </source>
</evidence>
<evidence type="ECO:0000255" key="4">
    <source>
        <dbReference type="PROSITE-ProRule" id="PRU00192"/>
    </source>
</evidence>
<evidence type="ECO:0000256" key="5">
    <source>
        <dbReference type="SAM" id="MobiDB-lite"/>
    </source>
</evidence>
<evidence type="ECO:0000269" key="6">
    <source>
    </source>
</evidence>
<evidence type="ECO:0000269" key="7">
    <source>
    </source>
</evidence>
<evidence type="ECO:0000269" key="8">
    <source>
    </source>
</evidence>
<evidence type="ECO:0000269" key="9">
    <source>
    </source>
</evidence>
<evidence type="ECO:0000269" key="10">
    <source>
    </source>
</evidence>
<evidence type="ECO:0000305" key="11"/>
<evidence type="ECO:0000305" key="12">
    <source>
    </source>
</evidence>
<evidence type="ECO:0007744" key="13">
    <source>
    </source>
</evidence>
<evidence type="ECO:0007744" key="14">
    <source>
    </source>
</evidence>
<evidence type="ECO:0007744" key="15">
    <source>
    </source>
</evidence>
<keyword id="KW-0965">Cell junction</keyword>
<keyword id="KW-0966">Cell projection</keyword>
<keyword id="KW-0963">Cytoplasm</keyword>
<keyword id="KW-0221">Differentiation</keyword>
<keyword id="KW-0597">Phosphoprotein</keyword>
<keyword id="KW-1185">Reference proteome</keyword>
<keyword id="KW-0677">Repeat</keyword>
<keyword id="KW-0728">SH3 domain</keyword>
<reference key="1">
    <citation type="journal article" date="2008" name="FEBS J.">
        <title>A novel gene, fad49, plays a crucial role in the immediate early stage of adipocyte differentiation via involvement in mitotic clonal expansion.</title>
        <authorList>
            <person name="Hishida T."/>
            <person name="Eguchi T."/>
            <person name="Osada S."/>
            <person name="Nishizuka M."/>
            <person name="Imagawa M."/>
        </authorList>
    </citation>
    <scope>NUCLEOTIDE SEQUENCE [MRNA]</scope>
    <scope>FUNCTION</scope>
    <scope>SUBCELLULAR LOCATION</scope>
    <scope>TISSUE SPECIFICITY</scope>
    <scope>DEVELOPMENTAL STAGE</scope>
    <scope>DOMAIN</scope>
</reference>
<reference key="2">
    <citation type="journal article" date="2005" name="Science">
        <title>The transcriptional landscape of the mammalian genome.</title>
        <authorList>
            <person name="Carninci P."/>
            <person name="Kasukawa T."/>
            <person name="Katayama S."/>
            <person name="Gough J."/>
            <person name="Frith M.C."/>
            <person name="Maeda N."/>
            <person name="Oyama R."/>
            <person name="Ravasi T."/>
            <person name="Lenhard B."/>
            <person name="Wells C."/>
            <person name="Kodzius R."/>
            <person name="Shimokawa K."/>
            <person name="Bajic V.B."/>
            <person name="Brenner S.E."/>
            <person name="Batalov S."/>
            <person name="Forrest A.R."/>
            <person name="Zavolan M."/>
            <person name="Davis M.J."/>
            <person name="Wilming L.G."/>
            <person name="Aidinis V."/>
            <person name="Allen J.E."/>
            <person name="Ambesi-Impiombato A."/>
            <person name="Apweiler R."/>
            <person name="Aturaliya R.N."/>
            <person name="Bailey T.L."/>
            <person name="Bansal M."/>
            <person name="Baxter L."/>
            <person name="Beisel K.W."/>
            <person name="Bersano T."/>
            <person name="Bono H."/>
            <person name="Chalk A.M."/>
            <person name="Chiu K.P."/>
            <person name="Choudhary V."/>
            <person name="Christoffels A."/>
            <person name="Clutterbuck D.R."/>
            <person name="Crowe M.L."/>
            <person name="Dalla E."/>
            <person name="Dalrymple B.P."/>
            <person name="de Bono B."/>
            <person name="Della Gatta G."/>
            <person name="di Bernardo D."/>
            <person name="Down T."/>
            <person name="Engstrom P."/>
            <person name="Fagiolini M."/>
            <person name="Faulkner G."/>
            <person name="Fletcher C.F."/>
            <person name="Fukushima T."/>
            <person name="Furuno M."/>
            <person name="Futaki S."/>
            <person name="Gariboldi M."/>
            <person name="Georgii-Hemming P."/>
            <person name="Gingeras T.R."/>
            <person name="Gojobori T."/>
            <person name="Green R.E."/>
            <person name="Gustincich S."/>
            <person name="Harbers M."/>
            <person name="Hayashi Y."/>
            <person name="Hensch T.K."/>
            <person name="Hirokawa N."/>
            <person name="Hill D."/>
            <person name="Huminiecki L."/>
            <person name="Iacono M."/>
            <person name="Ikeo K."/>
            <person name="Iwama A."/>
            <person name="Ishikawa T."/>
            <person name="Jakt M."/>
            <person name="Kanapin A."/>
            <person name="Katoh M."/>
            <person name="Kawasawa Y."/>
            <person name="Kelso J."/>
            <person name="Kitamura H."/>
            <person name="Kitano H."/>
            <person name="Kollias G."/>
            <person name="Krishnan S.P."/>
            <person name="Kruger A."/>
            <person name="Kummerfeld S.K."/>
            <person name="Kurochkin I.V."/>
            <person name="Lareau L.F."/>
            <person name="Lazarevic D."/>
            <person name="Lipovich L."/>
            <person name="Liu J."/>
            <person name="Liuni S."/>
            <person name="McWilliam S."/>
            <person name="Madan Babu M."/>
            <person name="Madera M."/>
            <person name="Marchionni L."/>
            <person name="Matsuda H."/>
            <person name="Matsuzawa S."/>
            <person name="Miki H."/>
            <person name="Mignone F."/>
            <person name="Miyake S."/>
            <person name="Morris K."/>
            <person name="Mottagui-Tabar S."/>
            <person name="Mulder N."/>
            <person name="Nakano N."/>
            <person name="Nakauchi H."/>
            <person name="Ng P."/>
            <person name="Nilsson R."/>
            <person name="Nishiguchi S."/>
            <person name="Nishikawa S."/>
            <person name="Nori F."/>
            <person name="Ohara O."/>
            <person name="Okazaki Y."/>
            <person name="Orlando V."/>
            <person name="Pang K.C."/>
            <person name="Pavan W.J."/>
            <person name="Pavesi G."/>
            <person name="Pesole G."/>
            <person name="Petrovsky N."/>
            <person name="Piazza S."/>
            <person name="Reed J."/>
            <person name="Reid J.F."/>
            <person name="Ring B.Z."/>
            <person name="Ringwald M."/>
            <person name="Rost B."/>
            <person name="Ruan Y."/>
            <person name="Salzberg S.L."/>
            <person name="Sandelin A."/>
            <person name="Schneider C."/>
            <person name="Schoenbach C."/>
            <person name="Sekiguchi K."/>
            <person name="Semple C.A."/>
            <person name="Seno S."/>
            <person name="Sessa L."/>
            <person name="Sheng Y."/>
            <person name="Shibata Y."/>
            <person name="Shimada H."/>
            <person name="Shimada K."/>
            <person name="Silva D."/>
            <person name="Sinclair B."/>
            <person name="Sperling S."/>
            <person name="Stupka E."/>
            <person name="Sugiura K."/>
            <person name="Sultana R."/>
            <person name="Takenaka Y."/>
            <person name="Taki K."/>
            <person name="Tammoja K."/>
            <person name="Tan S.L."/>
            <person name="Tang S."/>
            <person name="Taylor M.S."/>
            <person name="Tegner J."/>
            <person name="Teichmann S.A."/>
            <person name="Ueda H.R."/>
            <person name="van Nimwegen E."/>
            <person name="Verardo R."/>
            <person name="Wei C.L."/>
            <person name="Yagi K."/>
            <person name="Yamanishi H."/>
            <person name="Zabarovsky E."/>
            <person name="Zhu S."/>
            <person name="Zimmer A."/>
            <person name="Hide W."/>
            <person name="Bult C."/>
            <person name="Grimmond S.M."/>
            <person name="Teasdale R.D."/>
            <person name="Liu E.T."/>
            <person name="Brusic V."/>
            <person name="Quackenbush J."/>
            <person name="Wahlestedt C."/>
            <person name="Mattick J.S."/>
            <person name="Hume D.A."/>
            <person name="Kai C."/>
            <person name="Sasaki D."/>
            <person name="Tomaru Y."/>
            <person name="Fukuda S."/>
            <person name="Kanamori-Katayama M."/>
            <person name="Suzuki M."/>
            <person name="Aoki J."/>
            <person name="Arakawa T."/>
            <person name="Iida J."/>
            <person name="Imamura K."/>
            <person name="Itoh M."/>
            <person name="Kato T."/>
            <person name="Kawaji H."/>
            <person name="Kawagashira N."/>
            <person name="Kawashima T."/>
            <person name="Kojima M."/>
            <person name="Kondo S."/>
            <person name="Konno H."/>
            <person name="Nakano K."/>
            <person name="Ninomiya N."/>
            <person name="Nishio T."/>
            <person name="Okada M."/>
            <person name="Plessy C."/>
            <person name="Shibata K."/>
            <person name="Shiraki T."/>
            <person name="Suzuki S."/>
            <person name="Tagami M."/>
            <person name="Waki K."/>
            <person name="Watahiki A."/>
            <person name="Okamura-Oho Y."/>
            <person name="Suzuki H."/>
            <person name="Kawai J."/>
            <person name="Hayashizaki Y."/>
        </authorList>
    </citation>
    <scope>NUCLEOTIDE SEQUENCE [LARGE SCALE MRNA]</scope>
    <source>
        <strain>C57BL/6J</strain>
        <tissue>Dendritic cell</tissue>
    </source>
</reference>
<reference key="3">
    <citation type="journal article" date="2009" name="PLoS Biol.">
        <title>Lineage-specific biology revealed by a finished genome assembly of the mouse.</title>
        <authorList>
            <person name="Church D.M."/>
            <person name="Goodstadt L."/>
            <person name="Hillier L.W."/>
            <person name="Zody M.C."/>
            <person name="Goldstein S."/>
            <person name="She X."/>
            <person name="Bult C.J."/>
            <person name="Agarwala R."/>
            <person name="Cherry J.L."/>
            <person name="DiCuccio M."/>
            <person name="Hlavina W."/>
            <person name="Kapustin Y."/>
            <person name="Meric P."/>
            <person name="Maglott D."/>
            <person name="Birtle Z."/>
            <person name="Marques A.C."/>
            <person name="Graves T."/>
            <person name="Zhou S."/>
            <person name="Teague B."/>
            <person name="Potamousis K."/>
            <person name="Churas C."/>
            <person name="Place M."/>
            <person name="Herschleb J."/>
            <person name="Runnheim R."/>
            <person name="Forrest D."/>
            <person name="Amos-Landgraf J."/>
            <person name="Schwartz D.C."/>
            <person name="Cheng Z."/>
            <person name="Lindblad-Toh K."/>
            <person name="Eichler E.E."/>
            <person name="Ponting C.P."/>
        </authorList>
    </citation>
    <scope>NUCLEOTIDE SEQUENCE [LARGE SCALE GENOMIC DNA]</scope>
    <source>
        <strain>C57BL/6J</strain>
    </source>
</reference>
<reference key="4">
    <citation type="journal article" date="2004" name="Genome Res.">
        <title>The status, quality, and expansion of the NIH full-length cDNA project: the Mammalian Gene Collection (MGC).</title>
        <authorList>
            <consortium name="The MGC Project Team"/>
        </authorList>
    </citation>
    <scope>NUCLEOTIDE SEQUENCE [LARGE SCALE MRNA] OF 1-647</scope>
</reference>
<reference key="5">
    <citation type="journal article" date="2005" name="Nat. Biotechnol.">
        <title>Immunoaffinity profiling of tyrosine phosphorylation in cancer cells.</title>
        <authorList>
            <person name="Rush J."/>
            <person name="Moritz A."/>
            <person name="Lee K.A."/>
            <person name="Guo A."/>
            <person name="Goss V.L."/>
            <person name="Spek E.J."/>
            <person name="Zhang H."/>
            <person name="Zha X.-M."/>
            <person name="Polakiewicz R.D."/>
            <person name="Comb M.J."/>
        </authorList>
    </citation>
    <scope>PHOSPHORYLATION [LARGE SCALE ANALYSIS] AT TYR-661</scope>
    <scope>IDENTIFICATION BY MASS SPECTROMETRY [LARGE SCALE ANALYSIS]</scope>
</reference>
<reference key="6">
    <citation type="journal article" date="2009" name="Immunity">
        <title>The phagosomal proteome in interferon-gamma-activated macrophages.</title>
        <authorList>
            <person name="Trost M."/>
            <person name="English L."/>
            <person name="Lemieux S."/>
            <person name="Courcelles M."/>
            <person name="Desjardins M."/>
            <person name="Thibault P."/>
        </authorList>
    </citation>
    <scope>PHOSPHORYLATION [LARGE SCALE ANALYSIS] AT SER-840</scope>
    <scope>IDENTIFICATION BY MASS SPECTROMETRY [LARGE SCALE ANALYSIS]</scope>
</reference>
<reference key="7">
    <citation type="journal article" date="2009" name="Mamm. Genome">
        <title>The podosomal-adaptor protein SH3PXD2B is essential for normal postnatal development.</title>
        <authorList>
            <person name="Mao M."/>
            <person name="Thedens D.R."/>
            <person name="Chang B."/>
            <person name="Harris B.S."/>
            <person name="Zheng Q.Y."/>
            <person name="Johnson K.R."/>
            <person name="Donahue L.R."/>
            <person name="Anderson M.G."/>
        </authorList>
    </citation>
    <scope>SUBCELLULAR LOCATION</scope>
    <scope>TISSUE SPECIFICITY</scope>
    <scope>INTERACTION WITH ADAM15</scope>
</reference>
<reference key="8">
    <citation type="journal article" date="2009" name="Mol. Biol. Cell">
        <title>The novel adaptor protein Tks4 (SH3PXD2B) is required for functional podosome formation.</title>
        <authorList>
            <person name="Buschman M.D."/>
            <person name="Bromann P.A."/>
            <person name="Cejudo-Martin P."/>
            <person name="Wen F."/>
            <person name="Pass I."/>
            <person name="Courtneidge S.A."/>
        </authorList>
    </citation>
    <scope>FUNCTION</scope>
    <scope>TISSUE SPECIFICITY</scope>
    <scope>PHOSPHORYLATION AT TYR-25</scope>
    <scope>MUTAGENESIS OF TYR-25; TYR-373 AND TYR-508</scope>
    <scope>SUBCELLULAR LOCATION</scope>
</reference>
<reference key="9">
    <citation type="journal article" date="2009" name="Sci. Signal.">
        <title>Novel p47(phox)-related organizers regulate localized NADPH oxidase 1 (Nox1) activity.</title>
        <authorList>
            <person name="Gianni D."/>
            <person name="Diaz B."/>
            <person name="Taulet N."/>
            <person name="Fowler B."/>
            <person name="Courtneidge S.A."/>
            <person name="Bokoch G.M."/>
        </authorList>
    </citation>
    <scope>FUNCTION</scope>
    <scope>DISRUPTION PHENOTYPE</scope>
</reference>
<reference key="10">
    <citation type="journal article" date="2010" name="Am. J. Hum. Genet.">
        <title>Disruption of the podosome adaptor protein TKS4 (SH3PXD2B) causes the skeletal dysplasia, eye, and cardiac abnormalities of Frank-Ter Haar Syndrome.</title>
        <authorList>
            <person name="Iqbal Z."/>
            <person name="Cejudo-Martin P."/>
            <person name="de Brouwer A."/>
            <person name="van der Zwaag B."/>
            <person name="Ruiz-Lozano P."/>
            <person name="Scimia M.C."/>
            <person name="Lindsey J.D."/>
            <person name="Weinreb R."/>
            <person name="Albrecht B."/>
            <person name="Megarbane A."/>
            <person name="Alanay Y."/>
            <person name="Ben-Neriah Z."/>
            <person name="Amenduni M."/>
            <person name="Artuso R."/>
            <person name="Veltman J.A."/>
            <person name="van Beusekom E."/>
            <person name="Oudakker A."/>
            <person name="Millan J.L."/>
            <person name="Hennekam R."/>
            <person name="Hamel B."/>
            <person name="Courtneidge S.A."/>
            <person name="van Bokhoven H."/>
        </authorList>
    </citation>
    <scope>DEVELOPMENTAL STAGE</scope>
    <scope>DISRUPTION PHENOTYPE</scope>
</reference>
<reference key="11">
    <citation type="journal article" date="2010" name="Cell">
        <title>A tissue-specific atlas of mouse protein phosphorylation and expression.</title>
        <authorList>
            <person name="Huttlin E.L."/>
            <person name="Jedrychowski M.P."/>
            <person name="Elias J.E."/>
            <person name="Goswami T."/>
            <person name="Rad R."/>
            <person name="Beausoleil S.A."/>
            <person name="Villen J."/>
            <person name="Haas W."/>
            <person name="Sowa M.E."/>
            <person name="Gygi S.P."/>
        </authorList>
    </citation>
    <scope>PHOSPHORYLATION [LARGE SCALE ANALYSIS] AT SER-499 AND SER-528</scope>
    <scope>IDENTIFICATION BY MASS SPECTROMETRY [LARGE SCALE ANALYSIS]</scope>
    <source>
        <tissue>Brain</tissue>
        <tissue>Heart</tissue>
        <tissue>Kidney</tissue>
        <tissue>Lung</tissue>
        <tissue>Spleen</tissue>
    </source>
</reference>
<comment type="function">
    <text evidence="6 7 9">Adapter protein involved in invadopodia and podosome formation and extracellular matrix degradation. Binds matrix metalloproteinases (ADAMs), NADPH oxidases (NOXs) and phosphoinositides. Acts as an organizer protein that allows NOX1- or NOX3-dependent reactive oxygen species (ROS) generation and ROS localization. Plays a role in mitotic clonal expansion during the immediate early stage of adipocyte differentiation.</text>
</comment>
<comment type="subunit">
    <text evidence="1">Interacts with NOXO1 (By similarity). Interacts (via SH3 domains) with NOXA1; the interaction is direct (By similarity). Interacts with ADAM15. Interacts with FASLG (By similarity).</text>
</comment>
<comment type="subcellular location">
    <subcellularLocation>
        <location>Cytoplasm</location>
    </subcellularLocation>
    <subcellularLocation>
        <location>Cell projection</location>
        <location>Podosome</location>
    </subcellularLocation>
    <text>Cytoplasmic in normal cells and localizes to podosomes in SRC-transformed cells.</text>
</comment>
<comment type="tissue specificity">
    <text evidence="6 7 8">Highly expressed in the stromal-vascular fraction of white adipose tissue with moderate expression in heart, skeletal muscle and the mature adipocyte fraction of white adipose tissue. Also expressed in brain, spleen, kidney and liver. Expressed in white and brown adipose tissues, eye, lung, heart, brain, spleen, stomach, liver and skeletal muscle (at protein level). Not expressed in kidney or bone marrow.</text>
</comment>
<comment type="developmental stage">
    <text evidence="6 10">Expression increases quickly after induction of adipocyte differentiation, reaches a maximum after 3 hours and decreases by 12 hours. Expressed from embryonic day 10.5 dpc in heart and hindbrain, followed by an increased expression at 12.5 dpc that also involves a subset of cells on the luminal side of the left ventricular wall in the case of the heart and neuroepithelium in the case of the brain. At 14.5 dpc, expression is present in developing bones (proximal ribs, lower jaw and clavicle), but the expression in the heart is no longer detectable. At stages 16.5 dpc and 18.5 dpc, strong expression is seen in the long bones of the limbs, particularly in the growth plates, as well as in the facial and cranial bones and the primordial incisor. Expression in the ribs is seen in the proximal regions in those areas where the transition from cartilage to bone is expected to occur. Expression in the eye at 16.5 dpc is highly specific for the ganglion cell layer.</text>
</comment>
<comment type="domain">
    <text evidence="1">The PX domain is required for podosome localization because of its ability to bind phosphatidylinositol 3-phosphate (PtdIns(3)P) and phosphatidylinositol 3,4-bisphosphate (PtdIns(3,4)P2) and, to a lesser extent, phosphatidylinositol 4-phosphate (PtdIns(4)P), phosphatidylinositol 5-phosphate (PtdIns(5)P), and phosphatidylinositol 3,5-bisphosphate (PtdIns(3,5)P2). Binds to the third intramolecular SH3 domain (By similarity).</text>
</comment>
<comment type="PTM">
    <text evidence="7">Phosphorylated in SRC-transformed cells.</text>
</comment>
<comment type="disruption phenotype">
    <text evidence="9 10">Exhibit skeletal, cardiac and eye phenotypes. Mice have glaucoma and suffer growth retardation as well as craniofacial defects. Skeletons show marked kyphosis, poorly aligned teeth, anomalies in the iliac crest, and a prominent xiphisternum. Mice show loss of adipose tissue as well as cardiac deficiencies, such as dysmorphic ventricular chambers, thin mitral valves and immature and disarrayed trabeculae with frequent apical indentation. Mice show loss of ROS formation.</text>
</comment>
<comment type="similarity">
    <text evidence="11">Belongs to the SH3PXD2 family.</text>
</comment>
<comment type="sequence caution" evidence="11">
    <conflict type="frameshift">
        <sequence resource="EMBL-CDS" id="BAC40843"/>
    </conflict>
</comment>
<accession>A2AAY5</accession>
<accession>B6F0V1</accession>
<accession>Q1LZL8</accession>
<accession>Q1LZM5</accession>
<accession>Q3TB89</accession>
<accession>Q8BIC6</accession>